<feature type="chain" id="PRO_1000095825" description="Tryptophan synthase beta chain">
    <location>
        <begin position="1"/>
        <end position="428"/>
    </location>
</feature>
<feature type="modified residue" description="N6-(pyridoxal phosphate)lysine" evidence="1">
    <location>
        <position position="100"/>
    </location>
</feature>
<comment type="function">
    <text evidence="1">The beta subunit is responsible for the synthesis of L-tryptophan from indole and L-serine.</text>
</comment>
<comment type="catalytic activity">
    <reaction evidence="1">
        <text>(1S,2R)-1-C-(indol-3-yl)glycerol 3-phosphate + L-serine = D-glyceraldehyde 3-phosphate + L-tryptophan + H2O</text>
        <dbReference type="Rhea" id="RHEA:10532"/>
        <dbReference type="ChEBI" id="CHEBI:15377"/>
        <dbReference type="ChEBI" id="CHEBI:33384"/>
        <dbReference type="ChEBI" id="CHEBI:57912"/>
        <dbReference type="ChEBI" id="CHEBI:58866"/>
        <dbReference type="ChEBI" id="CHEBI:59776"/>
        <dbReference type="EC" id="4.2.1.20"/>
    </reaction>
</comment>
<comment type="cofactor">
    <cofactor evidence="1">
        <name>pyridoxal 5'-phosphate</name>
        <dbReference type="ChEBI" id="CHEBI:597326"/>
    </cofactor>
</comment>
<comment type="pathway">
    <text evidence="1">Amino-acid biosynthesis; L-tryptophan biosynthesis; L-tryptophan from chorismate: step 5/5.</text>
</comment>
<comment type="subunit">
    <text evidence="1">Tetramer of two alpha and two beta chains.</text>
</comment>
<comment type="similarity">
    <text evidence="1">Belongs to the TrpB family.</text>
</comment>
<accession>B1W0P0</accession>
<reference key="1">
    <citation type="journal article" date="2008" name="J. Bacteriol.">
        <title>Genome sequence of the streptomycin-producing microorganism Streptomyces griseus IFO 13350.</title>
        <authorList>
            <person name="Ohnishi Y."/>
            <person name="Ishikawa J."/>
            <person name="Hara H."/>
            <person name="Suzuki H."/>
            <person name="Ikenoya M."/>
            <person name="Ikeda H."/>
            <person name="Yamashita A."/>
            <person name="Hattori M."/>
            <person name="Horinouchi S."/>
        </authorList>
    </citation>
    <scope>NUCLEOTIDE SEQUENCE [LARGE SCALE GENOMIC DNA]</scope>
    <source>
        <strain>JCM 4626 / CBS 651.72 / NBRC 13350 / KCC S-0626 / ISP 5235</strain>
    </source>
</reference>
<sequence length="428" mass="45494">MSSDFFIPDPEGLIPSAEGYFGAYGGKFIPEALVAAVDEVAVEYDKAKSDPAFAAELNELMVNYTGRPSALTEVPRFAEHAGGARIFLKREDLNHTGSHKINNVLGQALLTKRMGKTRVIAETGAGQHGVATATACALFGLDCTIYMGEIDTERQALNVARMRMLGAEVVAVKSGSRTLKDAINEAFRDWVANVDRTHYLFGTVAGPHPFPAMVRDFHRVIGVEARRQILERAGRLPDAAVACVGGGSNAIGLFHAFIPDEGVRLVGCEPAGHGVETGEHAATLTAGEPGILHGSRSYVLQDDEGQITEPYSISAGLDYPGIGPEHSYLKDVGRGEYRAVTDDAAMQALRLLSRTEGIIPAIESAHALAGALDLGKELGKDGLILVNLSGRGDKDMDTAARYFGLYDADAAVEADADSDRAEIEGDAK</sequence>
<keyword id="KW-0028">Amino-acid biosynthesis</keyword>
<keyword id="KW-0057">Aromatic amino acid biosynthesis</keyword>
<keyword id="KW-0456">Lyase</keyword>
<keyword id="KW-0663">Pyridoxal phosphate</keyword>
<keyword id="KW-0822">Tryptophan biosynthesis</keyword>
<gene>
    <name evidence="1" type="primary">trpB</name>
    <name type="ordered locus">SGR_5471</name>
</gene>
<organism>
    <name type="scientific">Streptomyces griseus subsp. griseus (strain JCM 4626 / CBS 651.72 / NBRC 13350 / KCC S-0626 / ISP 5235)</name>
    <dbReference type="NCBI Taxonomy" id="455632"/>
    <lineage>
        <taxon>Bacteria</taxon>
        <taxon>Bacillati</taxon>
        <taxon>Actinomycetota</taxon>
        <taxon>Actinomycetes</taxon>
        <taxon>Kitasatosporales</taxon>
        <taxon>Streptomycetaceae</taxon>
        <taxon>Streptomyces</taxon>
    </lineage>
</organism>
<evidence type="ECO:0000255" key="1">
    <source>
        <dbReference type="HAMAP-Rule" id="MF_00133"/>
    </source>
</evidence>
<proteinExistence type="inferred from homology"/>
<name>TRPB_STRGG</name>
<dbReference type="EC" id="4.2.1.20" evidence="1"/>
<dbReference type="EMBL" id="AP009493">
    <property type="protein sequence ID" value="BAG22300.1"/>
    <property type="molecule type" value="Genomic_DNA"/>
</dbReference>
<dbReference type="RefSeq" id="WP_012381332.1">
    <property type="nucleotide sequence ID" value="NC_010572.1"/>
</dbReference>
<dbReference type="SMR" id="B1W0P0"/>
<dbReference type="KEGG" id="sgr:SGR_5471"/>
<dbReference type="PATRIC" id="fig|455632.4.peg.5603"/>
<dbReference type="eggNOG" id="COG0133">
    <property type="taxonomic scope" value="Bacteria"/>
</dbReference>
<dbReference type="HOGENOM" id="CLU_016734_3_1_11"/>
<dbReference type="UniPathway" id="UPA00035">
    <property type="reaction ID" value="UER00044"/>
</dbReference>
<dbReference type="Proteomes" id="UP000001685">
    <property type="component" value="Chromosome"/>
</dbReference>
<dbReference type="GO" id="GO:0005737">
    <property type="term" value="C:cytoplasm"/>
    <property type="evidence" value="ECO:0007669"/>
    <property type="project" value="TreeGrafter"/>
</dbReference>
<dbReference type="GO" id="GO:0004834">
    <property type="term" value="F:tryptophan synthase activity"/>
    <property type="evidence" value="ECO:0007669"/>
    <property type="project" value="UniProtKB-UniRule"/>
</dbReference>
<dbReference type="CDD" id="cd06446">
    <property type="entry name" value="Trp-synth_B"/>
    <property type="match status" value="1"/>
</dbReference>
<dbReference type="FunFam" id="3.40.50.1100:FF:000001">
    <property type="entry name" value="Tryptophan synthase beta chain"/>
    <property type="match status" value="1"/>
</dbReference>
<dbReference type="FunFam" id="3.40.50.1100:FF:000004">
    <property type="entry name" value="Tryptophan synthase beta chain"/>
    <property type="match status" value="1"/>
</dbReference>
<dbReference type="Gene3D" id="3.40.50.1100">
    <property type="match status" value="2"/>
</dbReference>
<dbReference type="HAMAP" id="MF_00133">
    <property type="entry name" value="Trp_synth_beta"/>
    <property type="match status" value="1"/>
</dbReference>
<dbReference type="InterPro" id="IPR006653">
    <property type="entry name" value="Trp_synth_b_CS"/>
</dbReference>
<dbReference type="InterPro" id="IPR006654">
    <property type="entry name" value="Trp_synth_beta"/>
</dbReference>
<dbReference type="InterPro" id="IPR023026">
    <property type="entry name" value="Trp_synth_beta/beta-like"/>
</dbReference>
<dbReference type="InterPro" id="IPR001926">
    <property type="entry name" value="TrpB-like_PALP"/>
</dbReference>
<dbReference type="InterPro" id="IPR036052">
    <property type="entry name" value="TrpB-like_PALP_sf"/>
</dbReference>
<dbReference type="NCBIfam" id="TIGR00263">
    <property type="entry name" value="trpB"/>
    <property type="match status" value="1"/>
</dbReference>
<dbReference type="PANTHER" id="PTHR48077:SF3">
    <property type="entry name" value="TRYPTOPHAN SYNTHASE"/>
    <property type="match status" value="1"/>
</dbReference>
<dbReference type="PANTHER" id="PTHR48077">
    <property type="entry name" value="TRYPTOPHAN SYNTHASE-RELATED"/>
    <property type="match status" value="1"/>
</dbReference>
<dbReference type="Pfam" id="PF00291">
    <property type="entry name" value="PALP"/>
    <property type="match status" value="1"/>
</dbReference>
<dbReference type="PIRSF" id="PIRSF001413">
    <property type="entry name" value="Trp_syn_beta"/>
    <property type="match status" value="1"/>
</dbReference>
<dbReference type="SUPFAM" id="SSF53686">
    <property type="entry name" value="Tryptophan synthase beta subunit-like PLP-dependent enzymes"/>
    <property type="match status" value="1"/>
</dbReference>
<dbReference type="PROSITE" id="PS00168">
    <property type="entry name" value="TRP_SYNTHASE_BETA"/>
    <property type="match status" value="1"/>
</dbReference>
<protein>
    <recommendedName>
        <fullName evidence="1">Tryptophan synthase beta chain</fullName>
        <ecNumber evidence="1">4.2.1.20</ecNumber>
    </recommendedName>
</protein>